<feature type="chain" id="PRO_0000142558" description="Inositol-1-monophosphatase">
    <location>
        <begin position="1"/>
        <end position="256"/>
    </location>
</feature>
<feature type="binding site" evidence="1">
    <location>
        <position position="60"/>
    </location>
    <ligand>
        <name>Mg(2+)</name>
        <dbReference type="ChEBI" id="CHEBI:18420"/>
        <label>1</label>
    </ligand>
</feature>
<feature type="binding site" evidence="1">
    <location>
        <position position="60"/>
    </location>
    <ligand>
        <name>substrate</name>
    </ligand>
</feature>
<feature type="binding site" evidence="1">
    <location>
        <position position="77"/>
    </location>
    <ligand>
        <name>Mg(2+)</name>
        <dbReference type="ChEBI" id="CHEBI:18420"/>
        <label>1</label>
    </ligand>
</feature>
<feature type="binding site" evidence="1">
    <location>
        <position position="77"/>
    </location>
    <ligand>
        <name>Mg(2+)</name>
        <dbReference type="ChEBI" id="CHEBI:18420"/>
        <label>2</label>
    </ligand>
</feature>
<feature type="binding site" evidence="1">
    <location>
        <begin position="79"/>
        <end position="82"/>
    </location>
    <ligand>
        <name>substrate</name>
    </ligand>
</feature>
<feature type="binding site" evidence="1">
    <location>
        <position position="79"/>
    </location>
    <ligand>
        <name>Mg(2+)</name>
        <dbReference type="ChEBI" id="CHEBI:18420"/>
        <label>1</label>
    </ligand>
</feature>
<feature type="binding site" evidence="1">
    <location>
        <position position="80"/>
    </location>
    <ligand>
        <name>Mg(2+)</name>
        <dbReference type="ChEBI" id="CHEBI:18420"/>
        <label>2</label>
    </ligand>
</feature>
<feature type="binding site" evidence="1">
    <location>
        <position position="178"/>
    </location>
    <ligand>
        <name>substrate</name>
    </ligand>
</feature>
<feature type="binding site" evidence="1">
    <location>
        <position position="207"/>
    </location>
    <ligand>
        <name>Mg(2+)</name>
        <dbReference type="ChEBI" id="CHEBI:18420"/>
        <label>2</label>
    </ligand>
</feature>
<feature type="binding site" evidence="1">
    <location>
        <position position="207"/>
    </location>
    <ligand>
        <name>substrate</name>
    </ligand>
</feature>
<keyword id="KW-0378">Hydrolase</keyword>
<keyword id="KW-0460">Magnesium</keyword>
<keyword id="KW-0479">Metal-binding</keyword>
<keyword id="KW-1185">Reference proteome</keyword>
<dbReference type="EC" id="3.1.3.25"/>
<dbReference type="EMBL" id="AE005673">
    <property type="protein sequence ID" value="AAK25231.1"/>
    <property type="molecule type" value="Genomic_DNA"/>
</dbReference>
<dbReference type="PIR" id="C87654">
    <property type="entry name" value="C87654"/>
</dbReference>
<dbReference type="RefSeq" id="NP_422063.1">
    <property type="nucleotide sequence ID" value="NC_002696.2"/>
</dbReference>
<dbReference type="SMR" id="Q9A3D5"/>
<dbReference type="STRING" id="190650.CC_3269"/>
<dbReference type="EnsemblBacteria" id="AAK25231">
    <property type="protein sequence ID" value="AAK25231"/>
    <property type="gene ID" value="CC_3269"/>
</dbReference>
<dbReference type="KEGG" id="ccr:CC_3269"/>
<dbReference type="PATRIC" id="fig|190650.5.peg.3275"/>
<dbReference type="eggNOG" id="COG0483">
    <property type="taxonomic scope" value="Bacteria"/>
</dbReference>
<dbReference type="HOGENOM" id="CLU_044118_0_0_5"/>
<dbReference type="BioCyc" id="CAULO:CC3269-MONOMER"/>
<dbReference type="Proteomes" id="UP000001816">
    <property type="component" value="Chromosome"/>
</dbReference>
<dbReference type="GO" id="GO:0008934">
    <property type="term" value="F:inositol monophosphate 1-phosphatase activity"/>
    <property type="evidence" value="ECO:0007669"/>
    <property type="project" value="InterPro"/>
</dbReference>
<dbReference type="GO" id="GO:0046872">
    <property type="term" value="F:metal ion binding"/>
    <property type="evidence" value="ECO:0007669"/>
    <property type="project" value="UniProtKB-KW"/>
</dbReference>
<dbReference type="GO" id="GO:0006020">
    <property type="term" value="P:inositol metabolic process"/>
    <property type="evidence" value="ECO:0007669"/>
    <property type="project" value="TreeGrafter"/>
</dbReference>
<dbReference type="GO" id="GO:0046854">
    <property type="term" value="P:phosphatidylinositol phosphate biosynthetic process"/>
    <property type="evidence" value="ECO:0007669"/>
    <property type="project" value="InterPro"/>
</dbReference>
<dbReference type="GO" id="GO:0007165">
    <property type="term" value="P:signal transduction"/>
    <property type="evidence" value="ECO:0007669"/>
    <property type="project" value="TreeGrafter"/>
</dbReference>
<dbReference type="CDD" id="cd01639">
    <property type="entry name" value="IMPase"/>
    <property type="match status" value="1"/>
</dbReference>
<dbReference type="FunFam" id="3.40.190.80:FF:000020">
    <property type="entry name" value="Fructose-1,6-bisphosphatase/inositol-1-monophosphatase"/>
    <property type="match status" value="1"/>
</dbReference>
<dbReference type="FunFam" id="3.30.540.10:FF:000003">
    <property type="entry name" value="Inositol-1-monophosphatase"/>
    <property type="match status" value="1"/>
</dbReference>
<dbReference type="Gene3D" id="3.40.190.80">
    <property type="match status" value="1"/>
</dbReference>
<dbReference type="Gene3D" id="3.30.540.10">
    <property type="entry name" value="Fructose-1,6-Bisphosphatase, subunit A, domain 1"/>
    <property type="match status" value="1"/>
</dbReference>
<dbReference type="InterPro" id="IPR033942">
    <property type="entry name" value="IMPase"/>
</dbReference>
<dbReference type="InterPro" id="IPR020583">
    <property type="entry name" value="Inositol_monoP_metal-BS"/>
</dbReference>
<dbReference type="InterPro" id="IPR000760">
    <property type="entry name" value="Inositol_monophosphatase-like"/>
</dbReference>
<dbReference type="InterPro" id="IPR020550">
    <property type="entry name" value="Inositol_monophosphatase_CS"/>
</dbReference>
<dbReference type="InterPro" id="IPR022337">
    <property type="entry name" value="Inositol_monophosphatase_SuhB"/>
</dbReference>
<dbReference type="PANTHER" id="PTHR20854">
    <property type="entry name" value="INOSITOL MONOPHOSPHATASE"/>
    <property type="match status" value="1"/>
</dbReference>
<dbReference type="PANTHER" id="PTHR20854:SF4">
    <property type="entry name" value="INOSITOL-1-MONOPHOSPHATASE-RELATED"/>
    <property type="match status" value="1"/>
</dbReference>
<dbReference type="Pfam" id="PF00459">
    <property type="entry name" value="Inositol_P"/>
    <property type="match status" value="1"/>
</dbReference>
<dbReference type="PRINTS" id="PR00377">
    <property type="entry name" value="IMPHPHTASES"/>
</dbReference>
<dbReference type="PRINTS" id="PR01959">
    <property type="entry name" value="SBIMPHPHTASE"/>
</dbReference>
<dbReference type="SUPFAM" id="SSF56655">
    <property type="entry name" value="Carbohydrate phosphatase"/>
    <property type="match status" value="1"/>
</dbReference>
<dbReference type="PROSITE" id="PS00629">
    <property type="entry name" value="IMP_1"/>
    <property type="match status" value="1"/>
</dbReference>
<dbReference type="PROSITE" id="PS00630">
    <property type="entry name" value="IMP_2"/>
    <property type="match status" value="1"/>
</dbReference>
<protein>
    <recommendedName>
        <fullName>Inositol-1-monophosphatase</fullName>
        <shortName>I-1-Pase</shortName>
        <shortName>IMPase</shortName>
        <shortName>Inositol-1-phosphatase</shortName>
        <ecNumber>3.1.3.25</ecNumber>
    </recommendedName>
</protein>
<reference key="1">
    <citation type="journal article" date="2001" name="Proc. Natl. Acad. Sci. U.S.A.">
        <title>Complete genome sequence of Caulobacter crescentus.</title>
        <authorList>
            <person name="Nierman W.C."/>
            <person name="Feldblyum T.V."/>
            <person name="Laub M.T."/>
            <person name="Paulsen I.T."/>
            <person name="Nelson K.E."/>
            <person name="Eisen J.A."/>
            <person name="Heidelberg J.F."/>
            <person name="Alley M.R.K."/>
            <person name="Ohta N."/>
            <person name="Maddock J.R."/>
            <person name="Potocka I."/>
            <person name="Nelson W.C."/>
            <person name="Newton A."/>
            <person name="Stephens C."/>
            <person name="Phadke N.D."/>
            <person name="Ely B."/>
            <person name="DeBoy R.T."/>
            <person name="Dodson R.J."/>
            <person name="Durkin A.S."/>
            <person name="Gwinn M.L."/>
            <person name="Haft D.H."/>
            <person name="Kolonay J.F."/>
            <person name="Smit J."/>
            <person name="Craven M.B."/>
            <person name="Khouri H.M."/>
            <person name="Shetty J."/>
            <person name="Berry K.J."/>
            <person name="Utterback T.R."/>
            <person name="Tran K."/>
            <person name="Wolf A.M."/>
            <person name="Vamathevan J.J."/>
            <person name="Ermolaeva M.D."/>
            <person name="White O."/>
            <person name="Salzberg S.L."/>
            <person name="Venter J.C."/>
            <person name="Shapiro L."/>
            <person name="Fraser C.M."/>
        </authorList>
    </citation>
    <scope>NUCLEOTIDE SEQUENCE [LARGE SCALE GENOMIC DNA]</scope>
    <source>
        <strain>ATCC 19089 / CIP 103742 / CB 15</strain>
    </source>
</reference>
<evidence type="ECO:0000250" key="1"/>
<evidence type="ECO:0000305" key="2"/>
<gene>
    <name type="primary">suhB</name>
    <name type="ordered locus">CC_3269</name>
</gene>
<comment type="catalytic activity">
    <reaction>
        <text>a myo-inositol phosphate + H2O = myo-inositol + phosphate</text>
        <dbReference type="Rhea" id="RHEA:24056"/>
        <dbReference type="ChEBI" id="CHEBI:15377"/>
        <dbReference type="ChEBI" id="CHEBI:17268"/>
        <dbReference type="ChEBI" id="CHEBI:43474"/>
        <dbReference type="ChEBI" id="CHEBI:84139"/>
        <dbReference type="EC" id="3.1.3.25"/>
    </reaction>
</comment>
<comment type="cofactor">
    <cofactor evidence="1">
        <name>Mg(2+)</name>
        <dbReference type="ChEBI" id="CHEBI:18420"/>
    </cofactor>
</comment>
<comment type="similarity">
    <text evidence="2">Belongs to the inositol monophosphatase superfamily.</text>
</comment>
<accession>Q9A3D5</accession>
<name>SUHB_CAUVC</name>
<sequence>MIEAARKAARGLARDFGEVTELQVSKKGAADFVTNADIKAEQTLFELLTKARPGYGFLGEERGMVEGTDKTHTWIVDPLDGTTNFMHAIPHFAVNIALQREGEGIVAGVTYNPITNDLFWVEKGKGAFLGAEKRLRVAARRHLDEAILATGVPFAGKPGHGQFLKELHQVSQKVAGVRRFGAASLDLAWVAAGRFDAFWERNLNSWDVAAGVLMIQESGGKITTIDESDHDVVQGKSILASNQDLHPQILERLRAA</sequence>
<proteinExistence type="inferred from homology"/>
<organism>
    <name type="scientific">Caulobacter vibrioides (strain ATCC 19089 / CIP 103742 / CB 15)</name>
    <name type="common">Caulobacter crescentus</name>
    <dbReference type="NCBI Taxonomy" id="190650"/>
    <lineage>
        <taxon>Bacteria</taxon>
        <taxon>Pseudomonadati</taxon>
        <taxon>Pseudomonadota</taxon>
        <taxon>Alphaproteobacteria</taxon>
        <taxon>Caulobacterales</taxon>
        <taxon>Caulobacteraceae</taxon>
        <taxon>Caulobacter</taxon>
    </lineage>
</organism>